<reference key="1">
    <citation type="journal article" date="2008" name="Mol. Biol. Evol.">
        <title>Genome evolution of Wolbachia strain wPip from the Culex pipiens group.</title>
        <authorList>
            <person name="Klasson L."/>
            <person name="Walker T."/>
            <person name="Sebaihia M."/>
            <person name="Sanders M.J."/>
            <person name="Quail M.A."/>
            <person name="Lord A."/>
            <person name="Sanders S."/>
            <person name="Earl J."/>
            <person name="O'Neill S.L."/>
            <person name="Thomson N."/>
            <person name="Sinkins S.P."/>
            <person name="Parkhill J."/>
        </authorList>
    </citation>
    <scope>NUCLEOTIDE SEQUENCE [LARGE SCALE GENOMIC DNA]</scope>
    <source>
        <strain>wPip</strain>
    </source>
</reference>
<protein>
    <recommendedName>
        <fullName evidence="1">Probable transcriptional regulatory protein WP1214</fullName>
    </recommendedName>
</protein>
<gene>
    <name type="ordered locus">WP1214</name>
</gene>
<accession>B3CNE0</accession>
<comment type="subcellular location">
    <subcellularLocation>
        <location evidence="1">Cytoplasm</location>
    </subcellularLocation>
</comment>
<comment type="similarity">
    <text evidence="1">Belongs to the TACO1 family.</text>
</comment>
<sequence>MAGHSQFSNIKHRKGAQDAKRSQKFTKLIREITVAAKQGLTDPELNPRLRSAIFSARKENLPKDKIETAIKNAAGNVAGESYEEIQYEGCGPSGAALIVHALTNNRNRTASEIRYIFSRKGGNLGETGCVSYLFDHVGLIVYKAEGINFEDLFNYGIELEVLNVEENNKEELYVITCGVKDFGRVRDAFYTKFGEPELARLSWQPKDLIEVSDKELIDKLSILVEELEDNDDVQYVEGNFIFADKL</sequence>
<proteinExistence type="inferred from homology"/>
<feature type="chain" id="PRO_1000132255" description="Probable transcriptional regulatory protein WP1214">
    <location>
        <begin position="1"/>
        <end position="246"/>
    </location>
</feature>
<feature type="region of interest" description="Disordered" evidence="2">
    <location>
        <begin position="1"/>
        <end position="22"/>
    </location>
</feature>
<evidence type="ECO:0000255" key="1">
    <source>
        <dbReference type="HAMAP-Rule" id="MF_00693"/>
    </source>
</evidence>
<evidence type="ECO:0000256" key="2">
    <source>
        <dbReference type="SAM" id="MobiDB-lite"/>
    </source>
</evidence>
<dbReference type="EMBL" id="AM999887">
    <property type="protein sequence ID" value="CAQ55322.1"/>
    <property type="molecule type" value="Genomic_DNA"/>
</dbReference>
<dbReference type="RefSeq" id="WP_007302578.1">
    <property type="nucleotide sequence ID" value="NC_010981.1"/>
</dbReference>
<dbReference type="SMR" id="B3CNE0"/>
<dbReference type="KEGG" id="wpi:WP1214"/>
<dbReference type="eggNOG" id="COG0217">
    <property type="taxonomic scope" value="Bacteria"/>
</dbReference>
<dbReference type="HOGENOM" id="CLU_062974_2_2_5"/>
<dbReference type="Proteomes" id="UP000008814">
    <property type="component" value="Chromosome"/>
</dbReference>
<dbReference type="GO" id="GO:0005737">
    <property type="term" value="C:cytoplasm"/>
    <property type="evidence" value="ECO:0007669"/>
    <property type="project" value="UniProtKB-SubCell"/>
</dbReference>
<dbReference type="GO" id="GO:0003677">
    <property type="term" value="F:DNA binding"/>
    <property type="evidence" value="ECO:0007669"/>
    <property type="project" value="UniProtKB-UniRule"/>
</dbReference>
<dbReference type="GO" id="GO:0006355">
    <property type="term" value="P:regulation of DNA-templated transcription"/>
    <property type="evidence" value="ECO:0007669"/>
    <property type="project" value="UniProtKB-UniRule"/>
</dbReference>
<dbReference type="FunFam" id="1.10.10.200:FF:000002">
    <property type="entry name" value="Probable transcriptional regulatory protein CLM62_37755"/>
    <property type="match status" value="1"/>
</dbReference>
<dbReference type="Gene3D" id="1.10.10.200">
    <property type="match status" value="1"/>
</dbReference>
<dbReference type="Gene3D" id="3.30.70.980">
    <property type="match status" value="2"/>
</dbReference>
<dbReference type="HAMAP" id="MF_00693">
    <property type="entry name" value="Transcrip_reg_TACO1"/>
    <property type="match status" value="1"/>
</dbReference>
<dbReference type="InterPro" id="IPR017856">
    <property type="entry name" value="Integrase-like_N"/>
</dbReference>
<dbReference type="InterPro" id="IPR048300">
    <property type="entry name" value="TACO1_YebC-like_2nd/3rd_dom"/>
</dbReference>
<dbReference type="InterPro" id="IPR049083">
    <property type="entry name" value="TACO1_YebC_N"/>
</dbReference>
<dbReference type="InterPro" id="IPR002876">
    <property type="entry name" value="Transcrip_reg_TACO1-like"/>
</dbReference>
<dbReference type="InterPro" id="IPR026564">
    <property type="entry name" value="Transcrip_reg_TACO1-like_dom3"/>
</dbReference>
<dbReference type="InterPro" id="IPR029072">
    <property type="entry name" value="YebC-like"/>
</dbReference>
<dbReference type="NCBIfam" id="NF001030">
    <property type="entry name" value="PRK00110.1"/>
    <property type="match status" value="1"/>
</dbReference>
<dbReference type="NCBIfam" id="NF009044">
    <property type="entry name" value="PRK12378.1"/>
    <property type="match status" value="1"/>
</dbReference>
<dbReference type="NCBIfam" id="TIGR01033">
    <property type="entry name" value="YebC/PmpR family DNA-binding transcriptional regulator"/>
    <property type="match status" value="1"/>
</dbReference>
<dbReference type="PANTHER" id="PTHR12532:SF11">
    <property type="match status" value="1"/>
</dbReference>
<dbReference type="PANTHER" id="PTHR12532">
    <property type="entry name" value="TRANSLATIONAL ACTIVATOR OF CYTOCHROME C OXIDASE 1"/>
    <property type="match status" value="1"/>
</dbReference>
<dbReference type="Pfam" id="PF20772">
    <property type="entry name" value="TACO1_YebC_N"/>
    <property type="match status" value="1"/>
</dbReference>
<dbReference type="Pfam" id="PF01709">
    <property type="entry name" value="Transcrip_reg"/>
    <property type="match status" value="1"/>
</dbReference>
<dbReference type="SUPFAM" id="SSF75625">
    <property type="entry name" value="YebC-like"/>
    <property type="match status" value="1"/>
</dbReference>
<organism>
    <name type="scientific">Wolbachia pipientis subsp. Culex pipiens (strain wPip)</name>
    <dbReference type="NCBI Taxonomy" id="570417"/>
    <lineage>
        <taxon>Bacteria</taxon>
        <taxon>Pseudomonadati</taxon>
        <taxon>Pseudomonadota</taxon>
        <taxon>Alphaproteobacteria</taxon>
        <taxon>Rickettsiales</taxon>
        <taxon>Anaplasmataceae</taxon>
        <taxon>Wolbachieae</taxon>
        <taxon>Wolbachia</taxon>
    </lineage>
</organism>
<name>Y1214_WOLPP</name>
<keyword id="KW-0963">Cytoplasm</keyword>
<keyword id="KW-0238">DNA-binding</keyword>
<keyword id="KW-0804">Transcription</keyword>
<keyword id="KW-0805">Transcription regulation</keyword>